<comment type="function">
    <text>Receptor for adenosine. The activity of this receptor is mediated by G proteins which inhibit adenylyl cyclase.</text>
</comment>
<comment type="subcellular location">
    <subcellularLocation>
        <location>Cell membrane</location>
        <topology>Multi-pass membrane protein</topology>
    </subcellularLocation>
</comment>
<comment type="tissue specificity">
    <text>Widely expressed in brain and spinal cord.</text>
</comment>
<comment type="similarity">
    <text evidence="2">Belongs to the G-protein coupled receptor 1 family.</text>
</comment>
<protein>
    <recommendedName>
        <fullName>Adenosine receptor A1</fullName>
    </recommendedName>
</protein>
<sequence length="326" mass="36695">MPPYISAFQAAYIGIEVLIALVSVPGNVLVIWAVKVNQALRDATFCFIVSLAVADVAVGALVIPLAILINIGPQTYFHTCLMVACPVLILTQSSILALLAIAVDRYLRVKIPLRYKTVVTQRRAAVAIAGCWILSLVVGLTPMFGWNNLSVVEQDWRANGSVGEPVIKCEFEKVISMEYMVYFNFFVWVLPPLLLMVLIYLEVFYLIRKQLNKKVSASSGDPQKYYGKELKIAKSLALILFLFALSWLPLHILNCITLFCPTCQKPSILIYIAIFLTHGNSAMNPIVYAFRIHKFRVTFLKIWNDHFRCQPKPPIDEDLPEEKAED</sequence>
<dbReference type="EMBL" id="M69045">
    <property type="protein sequence ID" value="AAB07231.1"/>
    <property type="molecule type" value="mRNA"/>
</dbReference>
<dbReference type="EMBL" id="M64299">
    <property type="protein sequence ID" value="AAA74471.1"/>
    <property type="molecule type" value="mRNA"/>
</dbReference>
<dbReference type="EMBL" id="AB001089">
    <property type="protein sequence ID" value="BAA19231.1"/>
    <property type="molecule type" value="mRNA"/>
</dbReference>
<dbReference type="EMBL" id="AF042079">
    <property type="protein sequence ID" value="AAC03772.1"/>
    <property type="molecule type" value="mRNA"/>
</dbReference>
<dbReference type="PIR" id="A40376">
    <property type="entry name" value="A40376"/>
</dbReference>
<dbReference type="RefSeq" id="NP_001416569.1">
    <property type="nucleotide sequence ID" value="NM_001429640.1"/>
</dbReference>
<dbReference type="RefSeq" id="NP_001416570.1">
    <property type="nucleotide sequence ID" value="NM_001429641.1"/>
</dbReference>
<dbReference type="RefSeq" id="NP_001416571.1">
    <property type="nucleotide sequence ID" value="NM_001429642.1"/>
</dbReference>
<dbReference type="RefSeq" id="NP_001416572.1">
    <property type="nucleotide sequence ID" value="NM_001429643.1"/>
</dbReference>
<dbReference type="RefSeq" id="NP_001416573.1">
    <property type="nucleotide sequence ID" value="NM_001429644.1"/>
</dbReference>
<dbReference type="RefSeq" id="NP_058851.2">
    <property type="nucleotide sequence ID" value="NM_017155.4"/>
</dbReference>
<dbReference type="RefSeq" id="XP_006249921.1">
    <property type="nucleotide sequence ID" value="XM_006249859.3"/>
</dbReference>
<dbReference type="RefSeq" id="XP_006249923.1">
    <property type="nucleotide sequence ID" value="XM_006249861.3"/>
</dbReference>
<dbReference type="SMR" id="P25099"/>
<dbReference type="BioGRID" id="247960">
    <property type="interactions" value="2"/>
</dbReference>
<dbReference type="CORUM" id="P25099"/>
<dbReference type="FunCoup" id="P25099">
    <property type="interactions" value="1278"/>
</dbReference>
<dbReference type="IntAct" id="P25099">
    <property type="interactions" value="1"/>
</dbReference>
<dbReference type="MINT" id="P25099"/>
<dbReference type="STRING" id="10116.ENSRNOP00000004602"/>
<dbReference type="BindingDB" id="P25099"/>
<dbReference type="ChEMBL" id="CHEMBL318"/>
<dbReference type="DrugCentral" id="P25099"/>
<dbReference type="GuidetoPHARMACOLOGY" id="18"/>
<dbReference type="GlyCosmos" id="P25099">
    <property type="glycosylation" value="2 sites, No reported glycans"/>
</dbReference>
<dbReference type="GlyGen" id="P25099">
    <property type="glycosylation" value="2 sites"/>
</dbReference>
<dbReference type="iPTMnet" id="P25099"/>
<dbReference type="PhosphoSitePlus" id="P25099"/>
<dbReference type="PaxDb" id="10116-ENSRNOP00000004602"/>
<dbReference type="DNASU" id="29290"/>
<dbReference type="Ensembl" id="ENSRNOT00000004602.3">
    <property type="protein sequence ID" value="ENSRNOP00000004602.1"/>
    <property type="gene ID" value="ENSRNOG00000003442.4"/>
</dbReference>
<dbReference type="GeneID" id="29290"/>
<dbReference type="KEGG" id="rno:29290"/>
<dbReference type="UCSC" id="RGD:2048">
    <property type="organism name" value="rat"/>
</dbReference>
<dbReference type="AGR" id="RGD:2048"/>
<dbReference type="CTD" id="134"/>
<dbReference type="RGD" id="2048">
    <property type="gene designation" value="Adora1"/>
</dbReference>
<dbReference type="eggNOG" id="KOG3656">
    <property type="taxonomic scope" value="Eukaryota"/>
</dbReference>
<dbReference type="GeneTree" id="ENSGT01030000234555"/>
<dbReference type="HOGENOM" id="CLU_009579_11_5_1"/>
<dbReference type="InParanoid" id="P25099"/>
<dbReference type="OMA" id="FCCKDTP"/>
<dbReference type="OrthoDB" id="5984709at2759"/>
<dbReference type="PhylomeDB" id="P25099"/>
<dbReference type="TreeFam" id="TF325296"/>
<dbReference type="Reactome" id="R-RNO-417973">
    <property type="pathway name" value="Adenosine P1 receptors"/>
</dbReference>
<dbReference type="Reactome" id="R-RNO-418594">
    <property type="pathway name" value="G alpha (i) signalling events"/>
</dbReference>
<dbReference type="PRO" id="PR:P25099"/>
<dbReference type="Proteomes" id="UP000002494">
    <property type="component" value="Chromosome 13"/>
</dbReference>
<dbReference type="Bgee" id="ENSRNOG00000003442">
    <property type="expression patterns" value="Expressed in cerebellum and 19 other cell types or tissues"/>
</dbReference>
<dbReference type="GO" id="GO:0032279">
    <property type="term" value="C:asymmetric synapse"/>
    <property type="evidence" value="ECO:0000314"/>
    <property type="project" value="RGD"/>
</dbReference>
<dbReference type="GO" id="GO:0030673">
    <property type="term" value="C:axolemma"/>
    <property type="evidence" value="ECO:0000314"/>
    <property type="project" value="RGD"/>
</dbReference>
<dbReference type="GO" id="GO:0016323">
    <property type="term" value="C:basolateral plasma membrane"/>
    <property type="evidence" value="ECO:0000314"/>
    <property type="project" value="RGD"/>
</dbReference>
<dbReference type="GO" id="GO:0044305">
    <property type="term" value="C:calyx of Held"/>
    <property type="evidence" value="ECO:0000314"/>
    <property type="project" value="SynGO"/>
</dbReference>
<dbReference type="GO" id="GO:0044297">
    <property type="term" value="C:cell body"/>
    <property type="evidence" value="ECO:0000314"/>
    <property type="project" value="BHF-UCL"/>
</dbReference>
<dbReference type="GO" id="GO:0005929">
    <property type="term" value="C:cilium"/>
    <property type="evidence" value="ECO:0007669"/>
    <property type="project" value="Ensembl"/>
</dbReference>
<dbReference type="GO" id="GO:0030425">
    <property type="term" value="C:dendrite"/>
    <property type="evidence" value="ECO:0000314"/>
    <property type="project" value="BHF-UCL"/>
</dbReference>
<dbReference type="GO" id="GO:0043197">
    <property type="term" value="C:dendritic spine"/>
    <property type="evidence" value="ECO:0000266"/>
    <property type="project" value="RGD"/>
</dbReference>
<dbReference type="GO" id="GO:0043025">
    <property type="term" value="C:neuronal cell body"/>
    <property type="evidence" value="ECO:0000314"/>
    <property type="project" value="RGD"/>
</dbReference>
<dbReference type="GO" id="GO:0005886">
    <property type="term" value="C:plasma membrane"/>
    <property type="evidence" value="ECO:0000266"/>
    <property type="project" value="RGD"/>
</dbReference>
<dbReference type="GO" id="GO:0045211">
    <property type="term" value="C:postsynaptic membrane"/>
    <property type="evidence" value="ECO:0000314"/>
    <property type="project" value="SynGO-UCL"/>
</dbReference>
<dbReference type="GO" id="GO:0048786">
    <property type="term" value="C:presynaptic active zone"/>
    <property type="evidence" value="ECO:0000314"/>
    <property type="project" value="RGD"/>
</dbReference>
<dbReference type="GO" id="GO:0042734">
    <property type="term" value="C:presynaptic membrane"/>
    <property type="evidence" value="ECO:0000314"/>
    <property type="project" value="SynGO-UCL"/>
</dbReference>
<dbReference type="GO" id="GO:0045202">
    <property type="term" value="C:synapse"/>
    <property type="evidence" value="ECO:0000266"/>
    <property type="project" value="RGD"/>
</dbReference>
<dbReference type="GO" id="GO:0043195">
    <property type="term" value="C:terminal bouton"/>
    <property type="evidence" value="ECO:0000314"/>
    <property type="project" value="RGD"/>
</dbReference>
<dbReference type="GO" id="GO:0001609">
    <property type="term" value="F:G protein-coupled adenosine receptor activity"/>
    <property type="evidence" value="ECO:0000314"/>
    <property type="project" value="BHF-UCL"/>
</dbReference>
<dbReference type="GO" id="GO:0001664">
    <property type="term" value="F:G protein-coupled receptor binding"/>
    <property type="evidence" value="ECO:0000353"/>
    <property type="project" value="BHF-UCL"/>
</dbReference>
<dbReference type="GO" id="GO:0031683">
    <property type="term" value="F:G-protein beta/gamma-subunit complex binding"/>
    <property type="evidence" value="ECO:0000314"/>
    <property type="project" value="RGD"/>
</dbReference>
<dbReference type="GO" id="GO:0031072">
    <property type="term" value="F:heat shock protein binding"/>
    <property type="evidence" value="ECO:0000353"/>
    <property type="project" value="RGD"/>
</dbReference>
<dbReference type="GO" id="GO:0032795">
    <property type="term" value="F:heterotrimeric G-protein binding"/>
    <property type="evidence" value="ECO:0000314"/>
    <property type="project" value="RGD"/>
</dbReference>
<dbReference type="GO" id="GO:0046982">
    <property type="term" value="F:protein heterodimerization activity"/>
    <property type="evidence" value="ECO:0000353"/>
    <property type="project" value="BHF-UCL"/>
</dbReference>
<dbReference type="GO" id="GO:0044877">
    <property type="term" value="F:protein-containing complex binding"/>
    <property type="evidence" value="ECO:0000353"/>
    <property type="project" value="RGD"/>
</dbReference>
<dbReference type="GO" id="GO:0001883">
    <property type="term" value="F:purine nucleoside binding"/>
    <property type="evidence" value="ECO:0000353"/>
    <property type="project" value="RGD"/>
</dbReference>
<dbReference type="GO" id="GO:0007193">
    <property type="term" value="P:adenylate cyclase-inhibiting G protein-coupled receptor signaling pathway"/>
    <property type="evidence" value="ECO:0000315"/>
    <property type="project" value="RGD"/>
</dbReference>
<dbReference type="GO" id="GO:0050890">
    <property type="term" value="P:cognition"/>
    <property type="evidence" value="ECO:0000315"/>
    <property type="project" value="RGD"/>
</dbReference>
<dbReference type="GO" id="GO:0050965">
    <property type="term" value="P:detection of temperature stimulus involved in sensory perception of pain"/>
    <property type="evidence" value="ECO:0000315"/>
    <property type="project" value="RGD"/>
</dbReference>
<dbReference type="GO" id="GO:0060079">
    <property type="term" value="P:excitatory postsynaptic potential"/>
    <property type="evidence" value="ECO:0000315"/>
    <property type="project" value="RGD"/>
</dbReference>
<dbReference type="GO" id="GO:0055089">
    <property type="term" value="P:fatty acid homeostasis"/>
    <property type="evidence" value="ECO:0000314"/>
    <property type="project" value="RGD"/>
</dbReference>
<dbReference type="GO" id="GO:0035589">
    <property type="term" value="P:G protein-coupled purinergic nucleotide receptor signaling pathway"/>
    <property type="evidence" value="ECO:0000314"/>
    <property type="project" value="BHF-UCL"/>
</dbReference>
<dbReference type="GO" id="GO:0007186">
    <property type="term" value="P:G protein-coupled receptor signaling pathway"/>
    <property type="evidence" value="ECO:0000314"/>
    <property type="project" value="RGD"/>
</dbReference>
<dbReference type="GO" id="GO:0050900">
    <property type="term" value="P:leukocyte migration"/>
    <property type="evidence" value="ECO:0000266"/>
    <property type="project" value="RGD"/>
</dbReference>
<dbReference type="GO" id="GO:0016042">
    <property type="term" value="P:lipid catabolic process"/>
    <property type="evidence" value="ECO:0000315"/>
    <property type="project" value="RGD"/>
</dbReference>
<dbReference type="GO" id="GO:0060292">
    <property type="term" value="P:long-term synaptic depression"/>
    <property type="evidence" value="ECO:0000266"/>
    <property type="project" value="RGD"/>
</dbReference>
<dbReference type="GO" id="GO:0070254">
    <property type="term" value="P:mucus secretion"/>
    <property type="evidence" value="ECO:0000266"/>
    <property type="project" value="RGD"/>
</dbReference>
<dbReference type="GO" id="GO:0002674">
    <property type="term" value="P:negative regulation of acute inflammatory response"/>
    <property type="evidence" value="ECO:0000314"/>
    <property type="project" value="RGD"/>
</dbReference>
<dbReference type="GO" id="GO:0043066">
    <property type="term" value="P:negative regulation of apoptotic process"/>
    <property type="evidence" value="ECO:0000314"/>
    <property type="project" value="RGD"/>
</dbReference>
<dbReference type="GO" id="GO:0045776">
    <property type="term" value="P:negative regulation of blood pressure"/>
    <property type="evidence" value="ECO:0000315"/>
    <property type="project" value="RGD"/>
</dbReference>
<dbReference type="GO" id="GO:0008285">
    <property type="term" value="P:negative regulation of cell population proliferation"/>
    <property type="evidence" value="ECO:0000314"/>
    <property type="project" value="RGD"/>
</dbReference>
<dbReference type="GO" id="GO:0042323">
    <property type="term" value="P:negative regulation of circadian sleep/wake cycle, non-REM sleep"/>
    <property type="evidence" value="ECO:0000315"/>
    <property type="project" value="RGD"/>
</dbReference>
<dbReference type="GO" id="GO:0042321">
    <property type="term" value="P:negative regulation of circadian sleep/wake cycle, sleep"/>
    <property type="evidence" value="ECO:0000314"/>
    <property type="project" value="RGD"/>
</dbReference>
<dbReference type="GO" id="GO:0014050">
    <property type="term" value="P:negative regulation of glutamate secretion"/>
    <property type="evidence" value="ECO:0000314"/>
    <property type="project" value="RGD"/>
</dbReference>
<dbReference type="GO" id="GO:0046888">
    <property type="term" value="P:negative regulation of hormone secretion"/>
    <property type="evidence" value="ECO:0000315"/>
    <property type="project" value="RGD"/>
</dbReference>
<dbReference type="GO" id="GO:0050728">
    <property type="term" value="P:negative regulation of inflammatory response"/>
    <property type="evidence" value="ECO:0000266"/>
    <property type="project" value="RGD"/>
</dbReference>
<dbReference type="GO" id="GO:0002686">
    <property type="term" value="P:negative regulation of leukocyte migration"/>
    <property type="evidence" value="ECO:0000266"/>
    <property type="project" value="RGD"/>
</dbReference>
<dbReference type="GO" id="GO:0050995">
    <property type="term" value="P:negative regulation of lipid catabolic process"/>
    <property type="evidence" value="ECO:0000314"/>
    <property type="project" value="RGD"/>
</dbReference>
<dbReference type="GO" id="GO:1900453">
    <property type="term" value="P:negative regulation of long-term synaptic depression"/>
    <property type="evidence" value="ECO:0000266"/>
    <property type="project" value="RGD"/>
</dbReference>
<dbReference type="GO" id="GO:1900272">
    <property type="term" value="P:negative regulation of long-term synaptic potentiation"/>
    <property type="evidence" value="ECO:0000315"/>
    <property type="project" value="RGD"/>
</dbReference>
<dbReference type="GO" id="GO:0070256">
    <property type="term" value="P:negative regulation of mucus secretion"/>
    <property type="evidence" value="ECO:0000266"/>
    <property type="project" value="RGD"/>
</dbReference>
<dbReference type="GO" id="GO:0032900">
    <property type="term" value="P:negative regulation of neurotrophin production"/>
    <property type="evidence" value="ECO:0000315"/>
    <property type="project" value="RGD"/>
</dbReference>
<dbReference type="GO" id="GO:0032229">
    <property type="term" value="P:negative regulation of synaptic transmission, GABAergic"/>
    <property type="evidence" value="ECO:0000315"/>
    <property type="project" value="RGD"/>
</dbReference>
<dbReference type="GO" id="GO:0051967">
    <property type="term" value="P:negative regulation of synaptic transmission, glutamatergic"/>
    <property type="evidence" value="ECO:0000314"/>
    <property type="project" value="RGD"/>
</dbReference>
<dbReference type="GO" id="GO:0003085">
    <property type="term" value="P:negative regulation of systemic arterial blood pressure"/>
    <property type="evidence" value="ECO:0000314"/>
    <property type="project" value="RGD"/>
</dbReference>
<dbReference type="GO" id="GO:0045777">
    <property type="term" value="P:positive regulation of blood pressure"/>
    <property type="evidence" value="ECO:0000314"/>
    <property type="project" value="RGD"/>
</dbReference>
<dbReference type="GO" id="GO:0035306">
    <property type="term" value="P:positive regulation of dephosphorylation"/>
    <property type="evidence" value="ECO:0000314"/>
    <property type="project" value="RGD"/>
</dbReference>
<dbReference type="GO" id="GO:0050996">
    <property type="term" value="P:positive regulation of lipid catabolic process"/>
    <property type="evidence" value="ECO:0000314"/>
    <property type="project" value="RGD"/>
</dbReference>
<dbReference type="GO" id="GO:0043410">
    <property type="term" value="P:positive regulation of MAPK cascade"/>
    <property type="evidence" value="ECO:0000314"/>
    <property type="project" value="RGD"/>
</dbReference>
<dbReference type="GO" id="GO:0032244">
    <property type="term" value="P:positive regulation of nucleoside transport"/>
    <property type="evidence" value="ECO:0000314"/>
    <property type="project" value="RGD"/>
</dbReference>
<dbReference type="GO" id="GO:0002793">
    <property type="term" value="P:positive regulation of peptide secretion"/>
    <property type="evidence" value="ECO:0000315"/>
    <property type="project" value="RGD"/>
</dbReference>
<dbReference type="GO" id="GO:0043268">
    <property type="term" value="P:positive regulation of potassium ion transport"/>
    <property type="evidence" value="ECO:0000314"/>
    <property type="project" value="RGD"/>
</dbReference>
<dbReference type="GO" id="GO:0003084">
    <property type="term" value="P:positive regulation of systemic arterial blood pressure"/>
    <property type="evidence" value="ECO:0000315"/>
    <property type="project" value="RGD"/>
</dbReference>
<dbReference type="GO" id="GO:0006612">
    <property type="term" value="P:protein targeting to membrane"/>
    <property type="evidence" value="ECO:0000315"/>
    <property type="project" value="RGD"/>
</dbReference>
<dbReference type="GO" id="GO:0086004">
    <property type="term" value="P:regulation of cardiac muscle cell contraction"/>
    <property type="evidence" value="ECO:0000314"/>
    <property type="project" value="RGD"/>
</dbReference>
<dbReference type="GO" id="GO:0055117">
    <property type="term" value="P:regulation of cardiac muscle contraction"/>
    <property type="evidence" value="ECO:0000315"/>
    <property type="project" value="RGD"/>
</dbReference>
<dbReference type="GO" id="GO:0003093">
    <property type="term" value="P:regulation of glomerular filtration"/>
    <property type="evidence" value="ECO:0000266"/>
    <property type="project" value="RGD"/>
</dbReference>
<dbReference type="GO" id="GO:0099509">
    <property type="term" value="P:regulation of presynaptic cytosolic calcium ion concentration"/>
    <property type="evidence" value="ECO:0000314"/>
    <property type="project" value="SynGO"/>
</dbReference>
<dbReference type="GO" id="GO:0002087">
    <property type="term" value="P:regulation of respiratory gaseous exchange by nervous system process"/>
    <property type="evidence" value="ECO:0000315"/>
    <property type="project" value="RGD"/>
</dbReference>
<dbReference type="GO" id="GO:0051930">
    <property type="term" value="P:regulation of sensory perception of pain"/>
    <property type="evidence" value="ECO:0000266"/>
    <property type="project" value="RGD"/>
</dbReference>
<dbReference type="GO" id="GO:0001666">
    <property type="term" value="P:response to hypoxia"/>
    <property type="evidence" value="ECO:0000315"/>
    <property type="project" value="RGD"/>
</dbReference>
<dbReference type="GO" id="GO:0014074">
    <property type="term" value="P:response to purine-containing compound"/>
    <property type="evidence" value="ECO:0000266"/>
    <property type="project" value="RGD"/>
</dbReference>
<dbReference type="GO" id="GO:0001659">
    <property type="term" value="P:temperature homeostasis"/>
    <property type="evidence" value="ECO:0000315"/>
    <property type="project" value="RGD"/>
</dbReference>
<dbReference type="GO" id="GO:0070328">
    <property type="term" value="P:triglyceride homeostasis"/>
    <property type="evidence" value="ECO:0000314"/>
    <property type="project" value="RGD"/>
</dbReference>
<dbReference type="GO" id="GO:0042310">
    <property type="term" value="P:vasoconstriction"/>
    <property type="evidence" value="ECO:0000266"/>
    <property type="project" value="RGD"/>
</dbReference>
<dbReference type="GO" id="GO:0042311">
    <property type="term" value="P:vasodilation"/>
    <property type="evidence" value="ECO:0000314"/>
    <property type="project" value="RGD"/>
</dbReference>
<dbReference type="CDD" id="cd15071">
    <property type="entry name" value="7tmA_Adenosine_R_A1"/>
    <property type="match status" value="1"/>
</dbReference>
<dbReference type="FunFam" id="1.20.1070.10:FF:000061">
    <property type="entry name" value="Adenosine receptor A2"/>
    <property type="match status" value="1"/>
</dbReference>
<dbReference type="Gene3D" id="1.20.1070.10">
    <property type="entry name" value="Rhodopsin 7-helix transmembrane proteins"/>
    <property type="match status" value="1"/>
</dbReference>
<dbReference type="InterPro" id="IPR001068">
    <property type="entry name" value="Adeno_A1_rcpt"/>
</dbReference>
<dbReference type="InterPro" id="IPR001634">
    <property type="entry name" value="Adenosn_rcpt"/>
</dbReference>
<dbReference type="InterPro" id="IPR000276">
    <property type="entry name" value="GPCR_Rhodpsn"/>
</dbReference>
<dbReference type="InterPro" id="IPR017452">
    <property type="entry name" value="GPCR_Rhodpsn_7TM"/>
</dbReference>
<dbReference type="PANTHER" id="PTHR24246:SF1">
    <property type="entry name" value="ADENOSINE RECEPTOR A1"/>
    <property type="match status" value="1"/>
</dbReference>
<dbReference type="PANTHER" id="PTHR24246">
    <property type="entry name" value="OLFACTORY RECEPTOR AND ADENOSINE RECEPTOR"/>
    <property type="match status" value="1"/>
</dbReference>
<dbReference type="Pfam" id="PF00001">
    <property type="entry name" value="7tm_1"/>
    <property type="match status" value="1"/>
</dbReference>
<dbReference type="PRINTS" id="PR00552">
    <property type="entry name" value="ADENOSINEA1R"/>
</dbReference>
<dbReference type="PRINTS" id="PR00424">
    <property type="entry name" value="ADENOSINER"/>
</dbReference>
<dbReference type="PRINTS" id="PR00237">
    <property type="entry name" value="GPCRRHODOPSN"/>
</dbReference>
<dbReference type="SMART" id="SM01381">
    <property type="entry name" value="7TM_GPCR_Srsx"/>
    <property type="match status" value="1"/>
</dbReference>
<dbReference type="SUPFAM" id="SSF81321">
    <property type="entry name" value="Family A G protein-coupled receptor-like"/>
    <property type="match status" value="1"/>
</dbReference>
<dbReference type="PROSITE" id="PS00237">
    <property type="entry name" value="G_PROTEIN_RECEP_F1_1"/>
    <property type="match status" value="1"/>
</dbReference>
<dbReference type="PROSITE" id="PS50262">
    <property type="entry name" value="G_PROTEIN_RECEP_F1_2"/>
    <property type="match status" value="1"/>
</dbReference>
<reference key="1">
    <citation type="journal article" date="1991" name="Mol. Endocrinol.">
        <title>Molecular cloning and characterization of a rat A1-adenosine receptor that is widely expressed in brain and spinal cord.</title>
        <authorList>
            <person name="Reppert S.M."/>
            <person name="Weaver D.R."/>
            <person name="Stehle J.H."/>
            <person name="Rivkees S.A."/>
        </authorList>
    </citation>
    <scope>NUCLEOTIDE SEQUENCE [MRNA]</scope>
</reference>
<reference key="2">
    <citation type="journal article" date="1991" name="Mol. Pharmacol.">
        <title>Cloning and expression of an A1 adenosine receptor from rat brain.</title>
        <authorList>
            <person name="Mahan L.C."/>
            <person name="McVittie L.D."/>
            <person name="Smyk-Randall E.M."/>
            <person name="Nakata H."/>
            <person name="Monsma F.J. Jr."/>
            <person name="Gerfen C.R."/>
            <person name="Sibley D.R."/>
        </authorList>
    </citation>
    <scope>NUCLEOTIDE SEQUENCE [MRNA]</scope>
    <source>
        <tissue>Brain</tissue>
    </source>
</reference>
<reference key="3">
    <citation type="submission" date="1997-03" db="EMBL/GenBank/DDBJ databases">
        <authorList>
            <person name="Hirabatake Y."/>
            <person name="Takao K."/>
            <person name="Hagiwara S."/>
            <person name="Kasanuki H."/>
            <person name="Hosoda S."/>
            <person name="Kokubun S."/>
        </authorList>
    </citation>
    <scope>NUCLEOTIDE SEQUENCE [MRNA]</scope>
    <source>
        <tissue>Heart</tissue>
    </source>
</reference>
<reference key="4">
    <citation type="submission" date="1998-01" db="EMBL/GenBank/DDBJ databases">
        <authorList>
            <person name="Yip L."/>
            <person name="Mourelatos K."/>
            <person name="Hewitt J."/>
            <person name="Kwok Y.N."/>
        </authorList>
    </citation>
    <scope>NUCLEOTIDE SEQUENCE [MRNA]</scope>
    <source>
        <strain>Wistar</strain>
    </source>
</reference>
<accession>P25099</accession>
<evidence type="ECO:0000255" key="1"/>
<evidence type="ECO:0000255" key="2">
    <source>
        <dbReference type="PROSITE-ProRule" id="PRU00521"/>
    </source>
</evidence>
<evidence type="ECO:0000305" key="3"/>
<name>AA1R_RAT</name>
<gene>
    <name type="primary">Adora1</name>
</gene>
<proteinExistence type="evidence at transcript level"/>
<feature type="chain" id="PRO_0000068994" description="Adenosine receptor A1">
    <location>
        <begin position="1"/>
        <end position="326"/>
    </location>
</feature>
<feature type="topological domain" description="Extracellular" evidence="1">
    <location>
        <begin position="1"/>
        <end position="10"/>
    </location>
</feature>
<feature type="transmembrane region" description="Helical; Name=1" evidence="1">
    <location>
        <begin position="11"/>
        <end position="33"/>
    </location>
</feature>
<feature type="topological domain" description="Cytoplasmic" evidence="1">
    <location>
        <begin position="34"/>
        <end position="46"/>
    </location>
</feature>
<feature type="transmembrane region" description="Helical; Name=2" evidence="1">
    <location>
        <begin position="47"/>
        <end position="69"/>
    </location>
</feature>
<feature type="topological domain" description="Extracellular" evidence="1">
    <location>
        <begin position="70"/>
        <end position="80"/>
    </location>
</feature>
<feature type="transmembrane region" description="Helical; Name=3" evidence="1">
    <location>
        <begin position="81"/>
        <end position="102"/>
    </location>
</feature>
<feature type="topological domain" description="Cytoplasmic" evidence="1">
    <location>
        <begin position="103"/>
        <end position="123"/>
    </location>
</feature>
<feature type="transmembrane region" description="Helical; Name=4" evidence="1">
    <location>
        <begin position="124"/>
        <end position="146"/>
    </location>
</feature>
<feature type="topological domain" description="Extracellular" evidence="1">
    <location>
        <begin position="147"/>
        <end position="176"/>
    </location>
</feature>
<feature type="transmembrane region" description="Helical; Name=5" evidence="1">
    <location>
        <begin position="177"/>
        <end position="201"/>
    </location>
</feature>
<feature type="topological domain" description="Cytoplasmic" evidence="1">
    <location>
        <begin position="202"/>
        <end position="235"/>
    </location>
</feature>
<feature type="transmembrane region" description="Helical; Name=6" evidence="1">
    <location>
        <begin position="236"/>
        <end position="259"/>
    </location>
</feature>
<feature type="topological domain" description="Extracellular" evidence="1">
    <location>
        <begin position="260"/>
        <end position="267"/>
    </location>
</feature>
<feature type="transmembrane region" description="Helical; Name=7" evidence="1">
    <location>
        <begin position="268"/>
        <end position="292"/>
    </location>
</feature>
<feature type="topological domain" description="Cytoplasmic" evidence="1">
    <location>
        <begin position="293"/>
        <end position="326"/>
    </location>
</feature>
<feature type="lipid moiety-binding region" description="S-palmitoyl cysteine" evidence="1">
    <location>
        <position position="309"/>
    </location>
</feature>
<feature type="glycosylation site" description="N-linked (GlcNAc...) asparagine" evidence="1">
    <location>
        <position position="148"/>
    </location>
</feature>
<feature type="glycosylation site" description="N-linked (GlcNAc...) asparagine" evidence="1">
    <location>
        <position position="159"/>
    </location>
</feature>
<feature type="disulfide bond" evidence="2">
    <location>
        <begin position="80"/>
        <end position="169"/>
    </location>
</feature>
<feature type="sequence conflict" description="In Ref. 1." evidence="3" ref="1">
    <original>EL</original>
    <variation>DV</variation>
    <location>
        <begin position="229"/>
        <end position="230"/>
    </location>
</feature>
<keyword id="KW-1003">Cell membrane</keyword>
<keyword id="KW-1015">Disulfide bond</keyword>
<keyword id="KW-0297">G-protein coupled receptor</keyword>
<keyword id="KW-0325">Glycoprotein</keyword>
<keyword id="KW-0449">Lipoprotein</keyword>
<keyword id="KW-0472">Membrane</keyword>
<keyword id="KW-0564">Palmitate</keyword>
<keyword id="KW-0675">Receptor</keyword>
<keyword id="KW-1185">Reference proteome</keyword>
<keyword id="KW-0807">Transducer</keyword>
<keyword id="KW-0812">Transmembrane</keyword>
<keyword id="KW-1133">Transmembrane helix</keyword>
<organism>
    <name type="scientific">Rattus norvegicus</name>
    <name type="common">Rat</name>
    <dbReference type="NCBI Taxonomy" id="10116"/>
    <lineage>
        <taxon>Eukaryota</taxon>
        <taxon>Metazoa</taxon>
        <taxon>Chordata</taxon>
        <taxon>Craniata</taxon>
        <taxon>Vertebrata</taxon>
        <taxon>Euteleostomi</taxon>
        <taxon>Mammalia</taxon>
        <taxon>Eutheria</taxon>
        <taxon>Euarchontoglires</taxon>
        <taxon>Glires</taxon>
        <taxon>Rodentia</taxon>
        <taxon>Myomorpha</taxon>
        <taxon>Muroidea</taxon>
        <taxon>Muridae</taxon>
        <taxon>Murinae</taxon>
        <taxon>Rattus</taxon>
    </lineage>
</organism>